<organism>
    <name type="scientific">Helicobacter pylori (strain J99 / ATCC 700824)</name>
    <name type="common">Campylobacter pylori J99</name>
    <dbReference type="NCBI Taxonomy" id="85963"/>
    <lineage>
        <taxon>Bacteria</taxon>
        <taxon>Pseudomonadati</taxon>
        <taxon>Campylobacterota</taxon>
        <taxon>Epsilonproteobacteria</taxon>
        <taxon>Campylobacterales</taxon>
        <taxon>Helicobacteraceae</taxon>
        <taxon>Helicobacter</taxon>
    </lineage>
</organism>
<dbReference type="EC" id="3.5.1.1"/>
<dbReference type="EMBL" id="AE001439">
    <property type="protein sequence ID" value="AAD06238.1"/>
    <property type="molecule type" value="Genomic_DNA"/>
</dbReference>
<dbReference type="PIR" id="D71904">
    <property type="entry name" value="D71904"/>
</dbReference>
<dbReference type="PDB" id="2WLT">
    <property type="method" value="X-ray"/>
    <property type="resolution" value="1.40 A"/>
    <property type="chains" value="A=1-332"/>
</dbReference>
<dbReference type="PDB" id="2WT4">
    <property type="method" value="X-ray"/>
    <property type="resolution" value="1.80 A"/>
    <property type="chains" value="A=1-332"/>
</dbReference>
<dbReference type="PDBsum" id="2WLT"/>
<dbReference type="PDBsum" id="2WT4"/>
<dbReference type="SMR" id="Q9ZLB9"/>
<dbReference type="KEGG" id="hpj:jhp_0661"/>
<dbReference type="eggNOG" id="COG0252">
    <property type="taxonomic scope" value="Bacteria"/>
</dbReference>
<dbReference type="BRENDA" id="3.5.1.1">
    <property type="organism ID" value="11068"/>
</dbReference>
<dbReference type="EvolutionaryTrace" id="Q9ZLB9"/>
<dbReference type="Proteomes" id="UP000000804">
    <property type="component" value="Chromosome"/>
</dbReference>
<dbReference type="GO" id="GO:0005737">
    <property type="term" value="C:cytoplasm"/>
    <property type="evidence" value="ECO:0007669"/>
    <property type="project" value="UniProtKB-SubCell"/>
</dbReference>
<dbReference type="GO" id="GO:0004067">
    <property type="term" value="F:asparaginase activity"/>
    <property type="evidence" value="ECO:0007669"/>
    <property type="project" value="UniProtKB-EC"/>
</dbReference>
<dbReference type="GO" id="GO:0006528">
    <property type="term" value="P:asparagine metabolic process"/>
    <property type="evidence" value="ECO:0007669"/>
    <property type="project" value="InterPro"/>
</dbReference>
<dbReference type="CDD" id="cd08964">
    <property type="entry name" value="L-asparaginase_II"/>
    <property type="match status" value="1"/>
</dbReference>
<dbReference type="FunFam" id="3.40.50.1170:FF:000001">
    <property type="entry name" value="L-asparaginase 2"/>
    <property type="match status" value="1"/>
</dbReference>
<dbReference type="Gene3D" id="3.40.50.40">
    <property type="match status" value="1"/>
</dbReference>
<dbReference type="Gene3D" id="3.40.50.1170">
    <property type="entry name" value="L-asparaginase, N-terminal domain"/>
    <property type="match status" value="1"/>
</dbReference>
<dbReference type="InterPro" id="IPR004550">
    <property type="entry name" value="AsnASE_II"/>
</dbReference>
<dbReference type="InterPro" id="IPR036152">
    <property type="entry name" value="Asp/glu_Ase-like_sf"/>
</dbReference>
<dbReference type="InterPro" id="IPR006034">
    <property type="entry name" value="Asparaginase/glutaminase-like"/>
</dbReference>
<dbReference type="InterPro" id="IPR020827">
    <property type="entry name" value="Asparaginase/glutaminase_AS1"/>
</dbReference>
<dbReference type="InterPro" id="IPR027475">
    <property type="entry name" value="Asparaginase/glutaminase_AS2"/>
</dbReference>
<dbReference type="InterPro" id="IPR040919">
    <property type="entry name" value="Asparaginase_C"/>
</dbReference>
<dbReference type="InterPro" id="IPR027473">
    <property type="entry name" value="L-asparaginase_C"/>
</dbReference>
<dbReference type="InterPro" id="IPR027474">
    <property type="entry name" value="L-asparaginase_N"/>
</dbReference>
<dbReference type="InterPro" id="IPR037152">
    <property type="entry name" value="L-asparaginase_N_sf"/>
</dbReference>
<dbReference type="NCBIfam" id="TIGR00520">
    <property type="entry name" value="asnASE_II"/>
    <property type="match status" value="1"/>
</dbReference>
<dbReference type="PANTHER" id="PTHR11707:SF28">
    <property type="entry name" value="60 KDA LYSOPHOSPHOLIPASE"/>
    <property type="match status" value="1"/>
</dbReference>
<dbReference type="PANTHER" id="PTHR11707">
    <property type="entry name" value="L-ASPARAGINASE"/>
    <property type="match status" value="1"/>
</dbReference>
<dbReference type="Pfam" id="PF00710">
    <property type="entry name" value="Asparaginase"/>
    <property type="match status" value="1"/>
</dbReference>
<dbReference type="Pfam" id="PF17763">
    <property type="entry name" value="Asparaginase_C"/>
    <property type="match status" value="1"/>
</dbReference>
<dbReference type="PIRSF" id="PIRSF001220">
    <property type="entry name" value="L-ASNase_gatD"/>
    <property type="match status" value="1"/>
</dbReference>
<dbReference type="PIRSF" id="PIRSF500176">
    <property type="entry name" value="L_ASNase"/>
    <property type="match status" value="1"/>
</dbReference>
<dbReference type="PRINTS" id="PR00139">
    <property type="entry name" value="ASNGLNASE"/>
</dbReference>
<dbReference type="SMART" id="SM00870">
    <property type="entry name" value="Asparaginase"/>
    <property type="match status" value="1"/>
</dbReference>
<dbReference type="SUPFAM" id="SSF53774">
    <property type="entry name" value="Glutaminase/Asparaginase"/>
    <property type="match status" value="1"/>
</dbReference>
<dbReference type="PROSITE" id="PS00144">
    <property type="entry name" value="ASN_GLN_ASE_1"/>
    <property type="match status" value="1"/>
</dbReference>
<dbReference type="PROSITE" id="PS00917">
    <property type="entry name" value="ASN_GLN_ASE_2"/>
    <property type="match status" value="1"/>
</dbReference>
<dbReference type="PROSITE" id="PS51732">
    <property type="entry name" value="ASN_GLN_ASE_3"/>
    <property type="match status" value="1"/>
</dbReference>
<accession>Q9ZLB9</accession>
<feature type="chain" id="PRO_0000171082" description="Probable L-asparaginase">
    <location>
        <begin position="1"/>
        <end position="332"/>
    </location>
</feature>
<feature type="domain" description="Asparaginase/glutaminase" evidence="2">
    <location>
        <begin position="6"/>
        <end position="332"/>
    </location>
</feature>
<feature type="active site" description="O-isoaspartyl threonine intermediate" evidence="3 4">
    <location>
        <position position="16"/>
    </location>
</feature>
<feature type="binding site" evidence="1">
    <location>
        <position position="62"/>
    </location>
    <ligand>
        <name>substrate</name>
    </ligand>
</feature>
<feature type="binding site" evidence="1">
    <location>
        <begin position="95"/>
        <end position="96"/>
    </location>
    <ligand>
        <name>substrate</name>
    </ligand>
</feature>
<feature type="strand" evidence="6">
    <location>
        <begin position="7"/>
        <end position="15"/>
    </location>
</feature>
<feature type="helix" evidence="6">
    <location>
        <begin position="16"/>
        <end position="18"/>
    </location>
</feature>
<feature type="helix" evidence="6">
    <location>
        <begin position="38"/>
        <end position="41"/>
    </location>
</feature>
<feature type="helix" evidence="6">
    <location>
        <begin position="46"/>
        <end position="48"/>
    </location>
</feature>
<feature type="strand" evidence="6">
    <location>
        <begin position="51"/>
        <end position="60"/>
    </location>
</feature>
<feature type="helix" evidence="6">
    <location>
        <begin position="62"/>
        <end position="64"/>
    </location>
</feature>
<feature type="helix" evidence="6">
    <location>
        <begin position="67"/>
        <end position="81"/>
    </location>
</feature>
<feature type="strand" evidence="6">
    <location>
        <begin position="88"/>
        <end position="92"/>
    </location>
</feature>
<feature type="strand" evidence="6">
    <location>
        <begin position="95"/>
        <end position="97"/>
    </location>
</feature>
<feature type="helix" evidence="6">
    <location>
        <begin position="98"/>
        <end position="108"/>
    </location>
</feature>
<feature type="strand" evidence="6">
    <location>
        <begin position="115"/>
        <end position="118"/>
    </location>
</feature>
<feature type="helix" evidence="6">
    <location>
        <begin position="131"/>
        <end position="143"/>
    </location>
</feature>
<feature type="helix" evidence="6">
    <location>
        <begin position="145"/>
        <end position="147"/>
    </location>
</feature>
<feature type="strand" evidence="6">
    <location>
        <begin position="152"/>
        <end position="156"/>
    </location>
</feature>
<feature type="strand" evidence="6">
    <location>
        <begin position="159"/>
        <end position="162"/>
    </location>
</feature>
<feature type="turn" evidence="6">
    <location>
        <begin position="163"/>
        <end position="165"/>
    </location>
</feature>
<feature type="strand" evidence="6">
    <location>
        <begin position="170"/>
        <end position="172"/>
    </location>
</feature>
<feature type="turn" evidence="6">
    <location>
        <begin position="180"/>
        <end position="182"/>
    </location>
</feature>
<feature type="strand" evidence="6">
    <location>
        <begin position="185"/>
        <end position="189"/>
    </location>
</feature>
<feature type="strand" evidence="6">
    <location>
        <begin position="192"/>
        <end position="195"/>
    </location>
</feature>
<feature type="helix" evidence="6">
    <location>
        <begin position="204"/>
        <end position="206"/>
    </location>
</feature>
<feature type="helix" evidence="6">
    <location>
        <begin position="211"/>
        <end position="213"/>
    </location>
</feature>
<feature type="strand" evidence="6">
    <location>
        <begin position="221"/>
        <end position="225"/>
    </location>
</feature>
<feature type="helix" evidence="6">
    <location>
        <begin position="233"/>
        <end position="240"/>
    </location>
</feature>
<feature type="strand" evidence="6">
    <location>
        <begin position="244"/>
        <end position="251"/>
    </location>
</feature>
<feature type="turn" evidence="6">
    <location>
        <begin position="252"/>
        <end position="254"/>
    </location>
</feature>
<feature type="helix" evidence="6">
    <location>
        <begin position="258"/>
        <end position="269"/>
    </location>
</feature>
<feature type="strand" evidence="6">
    <location>
        <begin position="273"/>
        <end position="283"/>
    </location>
</feature>
<feature type="strand" evidence="6">
    <location>
        <begin position="287"/>
        <end position="290"/>
    </location>
</feature>
<feature type="helix" evidence="6">
    <location>
        <begin position="292"/>
        <end position="295"/>
    </location>
</feature>
<feature type="helix" evidence="6">
    <location>
        <begin position="305"/>
        <end position="318"/>
    </location>
</feature>
<feature type="helix" evidence="6">
    <location>
        <begin position="322"/>
        <end position="331"/>
    </location>
</feature>
<sequence length="332" mass="35687">MAQNLPTIALLATGGTIAGSGVDASLGSYKSGELGVKELLKAIPSLNKIARIQGEQVSNIGSQDMNEEIWFKLAQRAQELLDDSRIQGVVITHGTDTLEESAYFLNLVLHSTKPVVLVGAMRNASSLSADGALNLYYAVSVAVNEKSANKGVLVVMDDTIFRVREVVKTHTTHISTFKALNSGAIGSVYYGKTRYYMQPLRKHTTESEFSLSQLKTPLPKVDIIYTHAGMTPDLFQASLNSHAKGVVIAGVGNGNVSAGFLKAMQEASQMGVVIVRSSRVGSGGVTSGEIDDKAYGFITSDNLNPQKARVLLQLALTKTNDKAKIQEMFEEY</sequence>
<protein>
    <recommendedName>
        <fullName>Probable L-asparaginase</fullName>
        <shortName>L-ASNase</shortName>
        <ecNumber>3.5.1.1</ecNumber>
    </recommendedName>
    <alternativeName>
        <fullName>L-asparagine amidohydrolase</fullName>
    </alternativeName>
</protein>
<comment type="catalytic activity">
    <reaction>
        <text>L-asparagine + H2O = L-aspartate + NH4(+)</text>
        <dbReference type="Rhea" id="RHEA:21016"/>
        <dbReference type="ChEBI" id="CHEBI:15377"/>
        <dbReference type="ChEBI" id="CHEBI:28938"/>
        <dbReference type="ChEBI" id="CHEBI:29991"/>
        <dbReference type="ChEBI" id="CHEBI:58048"/>
        <dbReference type="EC" id="3.5.1.1"/>
    </reaction>
</comment>
<comment type="subcellular location">
    <subcellularLocation>
        <location evidence="5">Cytoplasm</location>
    </subcellularLocation>
</comment>
<comment type="similarity">
    <text evidence="5">Belongs to the asparaginase 1 family.</text>
</comment>
<evidence type="ECO:0000250" key="1"/>
<evidence type="ECO:0000255" key="2">
    <source>
        <dbReference type="PROSITE-ProRule" id="PRU01068"/>
    </source>
</evidence>
<evidence type="ECO:0000255" key="3">
    <source>
        <dbReference type="PROSITE-ProRule" id="PRU10099"/>
    </source>
</evidence>
<evidence type="ECO:0000255" key="4">
    <source>
        <dbReference type="PROSITE-ProRule" id="PRU10100"/>
    </source>
</evidence>
<evidence type="ECO:0000305" key="5"/>
<evidence type="ECO:0007829" key="6">
    <source>
        <dbReference type="PDB" id="2WLT"/>
    </source>
</evidence>
<keyword id="KW-0002">3D-structure</keyword>
<keyword id="KW-0963">Cytoplasm</keyword>
<keyword id="KW-0378">Hydrolase</keyword>
<reference key="1">
    <citation type="journal article" date="1999" name="Nature">
        <title>Genomic sequence comparison of two unrelated isolates of the human gastric pathogen Helicobacter pylori.</title>
        <authorList>
            <person name="Alm R.A."/>
            <person name="Ling L.-S.L."/>
            <person name="Moir D.T."/>
            <person name="King B.L."/>
            <person name="Brown E.D."/>
            <person name="Doig P.C."/>
            <person name="Smith D.R."/>
            <person name="Noonan B."/>
            <person name="Guild B.C."/>
            <person name="deJonge B.L."/>
            <person name="Carmel G."/>
            <person name="Tummino P.J."/>
            <person name="Caruso A."/>
            <person name="Uria-Nickelsen M."/>
            <person name="Mills D.M."/>
            <person name="Ives C."/>
            <person name="Gibson R."/>
            <person name="Merberg D."/>
            <person name="Mills S.D."/>
            <person name="Jiang Q."/>
            <person name="Taylor D.E."/>
            <person name="Vovis G.F."/>
            <person name="Trust T.J."/>
        </authorList>
    </citation>
    <scope>NUCLEOTIDE SEQUENCE [LARGE SCALE GENOMIC DNA]</scope>
    <source>
        <strain>J99 / ATCC 700824</strain>
    </source>
</reference>
<reference key="2">
    <citation type="journal article" date="2009" name="Acta Crystallogr. D">
        <title>Structure of Helicobacter pylori L-asparaginase at 1.4 A resolution.</title>
        <authorList>
            <person name="Dhavala P."/>
            <person name="Papageorgiou A.C."/>
        </authorList>
    </citation>
    <scope>X-RAY CRYSTALLOGRAPHY (1.4 ANGSTROMS)</scope>
</reference>
<proteinExistence type="evidence at protein level"/>
<name>ASPG_HELPJ</name>
<gene>
    <name type="primary">ansA</name>
    <name type="synonym">asn</name>
    <name type="ordered locus">jhp_0661</name>
</gene>